<proteinExistence type="inferred from homology"/>
<name>NDK_BRUSI</name>
<comment type="function">
    <text evidence="1">Major role in the synthesis of nucleoside triphosphates other than ATP. The ATP gamma phosphate is transferred to the NDP beta phosphate via a ping-pong mechanism, using a phosphorylated active-site intermediate.</text>
</comment>
<comment type="catalytic activity">
    <reaction evidence="1">
        <text>a 2'-deoxyribonucleoside 5'-diphosphate + ATP = a 2'-deoxyribonucleoside 5'-triphosphate + ADP</text>
        <dbReference type="Rhea" id="RHEA:44640"/>
        <dbReference type="ChEBI" id="CHEBI:30616"/>
        <dbReference type="ChEBI" id="CHEBI:61560"/>
        <dbReference type="ChEBI" id="CHEBI:73316"/>
        <dbReference type="ChEBI" id="CHEBI:456216"/>
        <dbReference type="EC" id="2.7.4.6"/>
    </reaction>
</comment>
<comment type="catalytic activity">
    <reaction evidence="1">
        <text>a ribonucleoside 5'-diphosphate + ATP = a ribonucleoside 5'-triphosphate + ADP</text>
        <dbReference type="Rhea" id="RHEA:18113"/>
        <dbReference type="ChEBI" id="CHEBI:30616"/>
        <dbReference type="ChEBI" id="CHEBI:57930"/>
        <dbReference type="ChEBI" id="CHEBI:61557"/>
        <dbReference type="ChEBI" id="CHEBI:456216"/>
        <dbReference type="EC" id="2.7.4.6"/>
    </reaction>
</comment>
<comment type="cofactor">
    <cofactor evidence="1">
        <name>Mg(2+)</name>
        <dbReference type="ChEBI" id="CHEBI:18420"/>
    </cofactor>
</comment>
<comment type="subunit">
    <text evidence="1">Homotetramer.</text>
</comment>
<comment type="subcellular location">
    <subcellularLocation>
        <location evidence="1">Cytoplasm</location>
    </subcellularLocation>
</comment>
<comment type="similarity">
    <text evidence="1">Belongs to the NDK family.</text>
</comment>
<gene>
    <name evidence="1" type="primary">ndk</name>
    <name type="ordered locus">BSUIS_A0722</name>
</gene>
<evidence type="ECO:0000255" key="1">
    <source>
        <dbReference type="HAMAP-Rule" id="MF_00451"/>
    </source>
</evidence>
<organism>
    <name type="scientific">Brucella suis (strain ATCC 23445 / NCTC 10510)</name>
    <dbReference type="NCBI Taxonomy" id="470137"/>
    <lineage>
        <taxon>Bacteria</taxon>
        <taxon>Pseudomonadati</taxon>
        <taxon>Pseudomonadota</taxon>
        <taxon>Alphaproteobacteria</taxon>
        <taxon>Hyphomicrobiales</taxon>
        <taxon>Brucellaceae</taxon>
        <taxon>Brucella/Ochrobactrum group</taxon>
        <taxon>Brucella</taxon>
    </lineage>
</organism>
<reference key="1">
    <citation type="submission" date="2007-12" db="EMBL/GenBank/DDBJ databases">
        <title>Brucella suis ATCC 23445 whole genome shotgun sequencing project.</title>
        <authorList>
            <person name="Setubal J.C."/>
            <person name="Bowns C."/>
            <person name="Boyle S."/>
            <person name="Crasta O.R."/>
            <person name="Czar M.J."/>
            <person name="Dharmanolla C."/>
            <person name="Gillespie J.J."/>
            <person name="Kenyon R.W."/>
            <person name="Lu J."/>
            <person name="Mane S."/>
            <person name="Mohapatra S."/>
            <person name="Nagrani S."/>
            <person name="Purkayastha A."/>
            <person name="Rajasimha H.K."/>
            <person name="Shallom J.M."/>
            <person name="Shallom S."/>
            <person name="Shukla M."/>
            <person name="Snyder E.E."/>
            <person name="Sobral B.W."/>
            <person name="Wattam A.R."/>
            <person name="Will R."/>
            <person name="Williams K."/>
            <person name="Yoo H."/>
            <person name="Bruce D."/>
            <person name="Detter C."/>
            <person name="Munk C."/>
            <person name="Brettin T.S."/>
        </authorList>
    </citation>
    <scope>NUCLEOTIDE SEQUENCE [LARGE SCALE GENOMIC DNA]</scope>
    <source>
        <strain>ATCC 23445 / NCTC 10510</strain>
    </source>
</reference>
<sequence length="140" mass="15278">MAIERTFSMIKPDATRRNLTGAIIAKLEEAGLRVVASKRVWMSRREAEGFYAVHKDRPFFGELVEFMSSGPTVVQVLEGENAIAKNREVMGATNPANADEGTIRKTFALSIGENSVHGSDAPETAAEEIAYWFSGTEIVG</sequence>
<protein>
    <recommendedName>
        <fullName evidence="1">Nucleoside diphosphate kinase</fullName>
        <shortName evidence="1">NDK</shortName>
        <shortName evidence="1">NDP kinase</shortName>
        <ecNumber evidence="1">2.7.4.6</ecNumber>
    </recommendedName>
    <alternativeName>
        <fullName evidence="1">Nucleoside-2-P kinase</fullName>
    </alternativeName>
</protein>
<keyword id="KW-0067">ATP-binding</keyword>
<keyword id="KW-0963">Cytoplasm</keyword>
<keyword id="KW-0418">Kinase</keyword>
<keyword id="KW-0460">Magnesium</keyword>
<keyword id="KW-0479">Metal-binding</keyword>
<keyword id="KW-0546">Nucleotide metabolism</keyword>
<keyword id="KW-0547">Nucleotide-binding</keyword>
<keyword id="KW-0597">Phosphoprotein</keyword>
<keyword id="KW-0808">Transferase</keyword>
<dbReference type="EC" id="2.7.4.6" evidence="1"/>
<dbReference type="EMBL" id="CP000911">
    <property type="protein sequence ID" value="ABY37798.1"/>
    <property type="molecule type" value="Genomic_DNA"/>
</dbReference>
<dbReference type="RefSeq" id="WP_002963836.1">
    <property type="nucleotide sequence ID" value="NC_010169.1"/>
</dbReference>
<dbReference type="SMR" id="B0CL18"/>
<dbReference type="GeneID" id="97533983"/>
<dbReference type="KEGG" id="bmt:BSUIS_A0722"/>
<dbReference type="HOGENOM" id="CLU_060216_8_1_5"/>
<dbReference type="Proteomes" id="UP000008545">
    <property type="component" value="Chromosome I"/>
</dbReference>
<dbReference type="GO" id="GO:0005737">
    <property type="term" value="C:cytoplasm"/>
    <property type="evidence" value="ECO:0007669"/>
    <property type="project" value="UniProtKB-SubCell"/>
</dbReference>
<dbReference type="GO" id="GO:0005524">
    <property type="term" value="F:ATP binding"/>
    <property type="evidence" value="ECO:0007669"/>
    <property type="project" value="UniProtKB-UniRule"/>
</dbReference>
<dbReference type="GO" id="GO:0046872">
    <property type="term" value="F:metal ion binding"/>
    <property type="evidence" value="ECO:0007669"/>
    <property type="project" value="UniProtKB-KW"/>
</dbReference>
<dbReference type="GO" id="GO:0004550">
    <property type="term" value="F:nucleoside diphosphate kinase activity"/>
    <property type="evidence" value="ECO:0007669"/>
    <property type="project" value="UniProtKB-UniRule"/>
</dbReference>
<dbReference type="GO" id="GO:0006241">
    <property type="term" value="P:CTP biosynthetic process"/>
    <property type="evidence" value="ECO:0007669"/>
    <property type="project" value="UniProtKB-UniRule"/>
</dbReference>
<dbReference type="GO" id="GO:0006183">
    <property type="term" value="P:GTP biosynthetic process"/>
    <property type="evidence" value="ECO:0007669"/>
    <property type="project" value="UniProtKB-UniRule"/>
</dbReference>
<dbReference type="GO" id="GO:0006228">
    <property type="term" value="P:UTP biosynthetic process"/>
    <property type="evidence" value="ECO:0007669"/>
    <property type="project" value="UniProtKB-UniRule"/>
</dbReference>
<dbReference type="CDD" id="cd04413">
    <property type="entry name" value="NDPk_I"/>
    <property type="match status" value="1"/>
</dbReference>
<dbReference type="FunFam" id="3.30.70.141:FF:000001">
    <property type="entry name" value="Nucleoside diphosphate kinase"/>
    <property type="match status" value="1"/>
</dbReference>
<dbReference type="Gene3D" id="3.30.70.141">
    <property type="entry name" value="Nucleoside diphosphate kinase-like domain"/>
    <property type="match status" value="1"/>
</dbReference>
<dbReference type="HAMAP" id="MF_00451">
    <property type="entry name" value="NDP_kinase"/>
    <property type="match status" value="1"/>
</dbReference>
<dbReference type="InterPro" id="IPR034907">
    <property type="entry name" value="NDK-like_dom"/>
</dbReference>
<dbReference type="InterPro" id="IPR036850">
    <property type="entry name" value="NDK-like_dom_sf"/>
</dbReference>
<dbReference type="InterPro" id="IPR001564">
    <property type="entry name" value="Nucleoside_diP_kinase"/>
</dbReference>
<dbReference type="InterPro" id="IPR023005">
    <property type="entry name" value="Nucleoside_diP_kinase_AS"/>
</dbReference>
<dbReference type="NCBIfam" id="NF001908">
    <property type="entry name" value="PRK00668.1"/>
    <property type="match status" value="1"/>
</dbReference>
<dbReference type="PANTHER" id="PTHR11349">
    <property type="entry name" value="NUCLEOSIDE DIPHOSPHATE KINASE"/>
    <property type="match status" value="1"/>
</dbReference>
<dbReference type="Pfam" id="PF00334">
    <property type="entry name" value="NDK"/>
    <property type="match status" value="1"/>
</dbReference>
<dbReference type="PRINTS" id="PR01243">
    <property type="entry name" value="NUCDPKINASE"/>
</dbReference>
<dbReference type="SMART" id="SM00562">
    <property type="entry name" value="NDK"/>
    <property type="match status" value="1"/>
</dbReference>
<dbReference type="SUPFAM" id="SSF54919">
    <property type="entry name" value="Nucleoside diphosphate kinase, NDK"/>
    <property type="match status" value="1"/>
</dbReference>
<dbReference type="PROSITE" id="PS00469">
    <property type="entry name" value="NDPK"/>
    <property type="match status" value="1"/>
</dbReference>
<dbReference type="PROSITE" id="PS51374">
    <property type="entry name" value="NDPK_LIKE"/>
    <property type="match status" value="1"/>
</dbReference>
<feature type="chain" id="PRO_1000080955" description="Nucleoside diphosphate kinase">
    <location>
        <begin position="1"/>
        <end position="140"/>
    </location>
</feature>
<feature type="active site" description="Pros-phosphohistidine intermediate" evidence="1">
    <location>
        <position position="117"/>
    </location>
</feature>
<feature type="binding site" evidence="1">
    <location>
        <position position="11"/>
    </location>
    <ligand>
        <name>ATP</name>
        <dbReference type="ChEBI" id="CHEBI:30616"/>
    </ligand>
</feature>
<feature type="binding site" evidence="1">
    <location>
        <position position="59"/>
    </location>
    <ligand>
        <name>ATP</name>
        <dbReference type="ChEBI" id="CHEBI:30616"/>
    </ligand>
</feature>
<feature type="binding site" evidence="1">
    <location>
        <position position="87"/>
    </location>
    <ligand>
        <name>ATP</name>
        <dbReference type="ChEBI" id="CHEBI:30616"/>
    </ligand>
</feature>
<feature type="binding site" evidence="1">
    <location>
        <position position="93"/>
    </location>
    <ligand>
        <name>ATP</name>
        <dbReference type="ChEBI" id="CHEBI:30616"/>
    </ligand>
</feature>
<feature type="binding site" evidence="1">
    <location>
        <position position="104"/>
    </location>
    <ligand>
        <name>ATP</name>
        <dbReference type="ChEBI" id="CHEBI:30616"/>
    </ligand>
</feature>
<feature type="binding site" evidence="1">
    <location>
        <position position="114"/>
    </location>
    <ligand>
        <name>ATP</name>
        <dbReference type="ChEBI" id="CHEBI:30616"/>
    </ligand>
</feature>
<accession>B0CL18</accession>